<evidence type="ECO:0000250" key="1">
    <source>
        <dbReference type="UniProtKB" id="F4I1H5"/>
    </source>
</evidence>
<evidence type="ECO:0000303" key="2">
    <source>
    </source>
</evidence>
<evidence type="ECO:0000305" key="3"/>
<evidence type="ECO:0000312" key="4">
    <source>
        <dbReference type="Araport" id="AT1G29510"/>
    </source>
</evidence>
<evidence type="ECO:0000312" key="5">
    <source>
        <dbReference type="EMBL" id="AAG51725.1"/>
    </source>
</evidence>
<reference key="1">
    <citation type="journal article" date="2000" name="Nature">
        <title>Sequence and analysis of chromosome 1 of the plant Arabidopsis thaliana.</title>
        <authorList>
            <person name="Theologis A."/>
            <person name="Ecker J.R."/>
            <person name="Palm C.J."/>
            <person name="Federspiel N.A."/>
            <person name="Kaul S."/>
            <person name="White O."/>
            <person name="Alonso J."/>
            <person name="Altafi H."/>
            <person name="Araujo R."/>
            <person name="Bowman C.L."/>
            <person name="Brooks S.Y."/>
            <person name="Buehler E."/>
            <person name="Chan A."/>
            <person name="Chao Q."/>
            <person name="Chen H."/>
            <person name="Cheuk R.F."/>
            <person name="Chin C.W."/>
            <person name="Chung M.K."/>
            <person name="Conn L."/>
            <person name="Conway A.B."/>
            <person name="Conway A.R."/>
            <person name="Creasy T.H."/>
            <person name="Dewar K."/>
            <person name="Dunn P."/>
            <person name="Etgu P."/>
            <person name="Feldblyum T.V."/>
            <person name="Feng J.-D."/>
            <person name="Fong B."/>
            <person name="Fujii C.Y."/>
            <person name="Gill J.E."/>
            <person name="Goldsmith A.D."/>
            <person name="Haas B."/>
            <person name="Hansen N.F."/>
            <person name="Hughes B."/>
            <person name="Huizar L."/>
            <person name="Hunter J.L."/>
            <person name="Jenkins J."/>
            <person name="Johnson-Hopson C."/>
            <person name="Khan S."/>
            <person name="Khaykin E."/>
            <person name="Kim C.J."/>
            <person name="Koo H.L."/>
            <person name="Kremenetskaia I."/>
            <person name="Kurtz D.B."/>
            <person name="Kwan A."/>
            <person name="Lam B."/>
            <person name="Langin-Hooper S."/>
            <person name="Lee A."/>
            <person name="Lee J.M."/>
            <person name="Lenz C.A."/>
            <person name="Li J.H."/>
            <person name="Li Y.-P."/>
            <person name="Lin X."/>
            <person name="Liu S.X."/>
            <person name="Liu Z.A."/>
            <person name="Luros J.S."/>
            <person name="Maiti R."/>
            <person name="Marziali A."/>
            <person name="Militscher J."/>
            <person name="Miranda M."/>
            <person name="Nguyen M."/>
            <person name="Nierman W.C."/>
            <person name="Osborne B.I."/>
            <person name="Pai G."/>
            <person name="Peterson J."/>
            <person name="Pham P.K."/>
            <person name="Rizzo M."/>
            <person name="Rooney T."/>
            <person name="Rowley D."/>
            <person name="Sakano H."/>
            <person name="Salzberg S.L."/>
            <person name="Schwartz J.R."/>
            <person name="Shinn P."/>
            <person name="Southwick A.M."/>
            <person name="Sun H."/>
            <person name="Tallon L.J."/>
            <person name="Tambunga G."/>
            <person name="Toriumi M.J."/>
            <person name="Town C.D."/>
            <person name="Utterback T."/>
            <person name="Van Aken S."/>
            <person name="Vaysberg M."/>
            <person name="Vysotskaia V.S."/>
            <person name="Walker M."/>
            <person name="Wu D."/>
            <person name="Yu G."/>
            <person name="Fraser C.M."/>
            <person name="Venter J.C."/>
            <person name="Davis R.W."/>
        </authorList>
    </citation>
    <scope>NUCLEOTIDE SEQUENCE [LARGE SCALE GENOMIC DNA]</scope>
    <source>
        <strain>cv. Columbia</strain>
    </source>
</reference>
<reference key="2">
    <citation type="journal article" date="2017" name="Plant J.">
        <title>Araport11: a complete reannotation of the Arabidopsis thaliana reference genome.</title>
        <authorList>
            <person name="Cheng C.Y."/>
            <person name="Krishnakumar V."/>
            <person name="Chan A.P."/>
            <person name="Thibaud-Nissen F."/>
            <person name="Schobel S."/>
            <person name="Town C.D."/>
        </authorList>
    </citation>
    <scope>GENOME REANNOTATION</scope>
    <source>
        <strain>cv. Columbia</strain>
    </source>
</reference>
<reference key="3">
    <citation type="journal article" date="2002" name="Science">
        <title>Functional annotation of a full-length Arabidopsis cDNA collection.</title>
        <authorList>
            <person name="Seki M."/>
            <person name="Narusaka M."/>
            <person name="Kamiya A."/>
            <person name="Ishida J."/>
            <person name="Satou M."/>
            <person name="Sakurai T."/>
            <person name="Nakajima M."/>
            <person name="Enju A."/>
            <person name="Akiyama K."/>
            <person name="Oono Y."/>
            <person name="Muramatsu M."/>
            <person name="Hayashizaki Y."/>
            <person name="Kawai J."/>
            <person name="Carninci P."/>
            <person name="Itoh M."/>
            <person name="Ishii Y."/>
            <person name="Arakawa T."/>
            <person name="Shibata K."/>
            <person name="Shinagawa A."/>
            <person name="Shinozaki K."/>
        </authorList>
    </citation>
    <scope>NUCLEOTIDE SEQUENCE [LARGE SCALE MRNA]</scope>
    <source>
        <strain>cv. Columbia</strain>
    </source>
</reference>
<reference key="4">
    <citation type="journal article" date="2003" name="Science">
        <title>Empirical analysis of transcriptional activity in the Arabidopsis genome.</title>
        <authorList>
            <person name="Yamada K."/>
            <person name="Lim J."/>
            <person name="Dale J.M."/>
            <person name="Chen H."/>
            <person name="Shinn P."/>
            <person name="Palm C.J."/>
            <person name="Southwick A.M."/>
            <person name="Wu H.C."/>
            <person name="Kim C.J."/>
            <person name="Nguyen M."/>
            <person name="Pham P.K."/>
            <person name="Cheuk R.F."/>
            <person name="Karlin-Newmann G."/>
            <person name="Liu S.X."/>
            <person name="Lam B."/>
            <person name="Sakano H."/>
            <person name="Wu T."/>
            <person name="Yu G."/>
            <person name="Miranda M."/>
            <person name="Quach H.L."/>
            <person name="Tripp M."/>
            <person name="Chang C.H."/>
            <person name="Lee J.M."/>
            <person name="Toriumi M.J."/>
            <person name="Chan M.M."/>
            <person name="Tang C.C."/>
            <person name="Onodera C.S."/>
            <person name="Deng J.M."/>
            <person name="Akiyama K."/>
            <person name="Ansari Y."/>
            <person name="Arakawa T."/>
            <person name="Banh J."/>
            <person name="Banno F."/>
            <person name="Bowser L."/>
            <person name="Brooks S.Y."/>
            <person name="Carninci P."/>
            <person name="Chao Q."/>
            <person name="Choy N."/>
            <person name="Enju A."/>
            <person name="Goldsmith A.D."/>
            <person name="Gurjal M."/>
            <person name="Hansen N.F."/>
            <person name="Hayashizaki Y."/>
            <person name="Johnson-Hopson C."/>
            <person name="Hsuan V.W."/>
            <person name="Iida K."/>
            <person name="Karnes M."/>
            <person name="Khan S."/>
            <person name="Koesema E."/>
            <person name="Ishida J."/>
            <person name="Jiang P.X."/>
            <person name="Jones T."/>
            <person name="Kawai J."/>
            <person name="Kamiya A."/>
            <person name="Meyers C."/>
            <person name="Nakajima M."/>
            <person name="Narusaka M."/>
            <person name="Seki M."/>
            <person name="Sakurai T."/>
            <person name="Satou M."/>
            <person name="Tamse R."/>
            <person name="Vaysberg M."/>
            <person name="Wallender E.K."/>
            <person name="Wong C."/>
            <person name="Yamamura Y."/>
            <person name="Yuan S."/>
            <person name="Shinozaki K."/>
            <person name="Davis R.W."/>
            <person name="Theologis A."/>
            <person name="Ecker J.R."/>
        </authorList>
    </citation>
    <scope>NUCLEOTIDE SEQUENCE [LARGE SCALE MRNA]</scope>
    <source>
        <strain>cv. Columbia</strain>
    </source>
</reference>
<reference key="5">
    <citation type="submission" date="2002-03" db="EMBL/GenBank/DDBJ databases">
        <title>Full-length cDNA from Arabidopsis thaliana.</title>
        <authorList>
            <person name="Brover V.V."/>
            <person name="Troukhan M.E."/>
            <person name="Alexandrov N.A."/>
            <person name="Lu Y.-P."/>
            <person name="Flavell R.B."/>
            <person name="Feldmann K.A."/>
        </authorList>
    </citation>
    <scope>NUCLEOTIDE SEQUENCE [LARGE SCALE MRNA]</scope>
</reference>
<reference key="6">
    <citation type="journal article" date="2002" name="Plant Mol. Biol.">
        <title>Auxin-responsive gene expression: genes, promoters and regulatory factors.</title>
        <authorList>
            <person name="Hagen G."/>
            <person name="Guilfoyle T.J."/>
        </authorList>
    </citation>
    <scope>GENE FAMILY</scope>
    <scope>NOMENCLATURE</scope>
</reference>
<dbReference type="EMBL" id="AC068667">
    <property type="protein sequence ID" value="AAG51725.1"/>
    <property type="status" value="ALT_INIT"/>
    <property type="molecule type" value="Genomic_DNA"/>
</dbReference>
<dbReference type="EMBL" id="CP002684">
    <property type="protein sequence ID" value="AEE31098.1"/>
    <property type="molecule type" value="Genomic_DNA"/>
</dbReference>
<dbReference type="EMBL" id="AK118573">
    <property type="protein sequence ID" value="BAC43173.1"/>
    <property type="molecule type" value="mRNA"/>
</dbReference>
<dbReference type="EMBL" id="BT003660">
    <property type="protein sequence ID" value="AAO39888.1"/>
    <property type="molecule type" value="mRNA"/>
</dbReference>
<dbReference type="EMBL" id="AY088721">
    <property type="protein sequence ID" value="AAM67039.1"/>
    <property type="status" value="ALT_INIT"/>
    <property type="molecule type" value="mRNA"/>
</dbReference>
<dbReference type="PIR" id="A86418">
    <property type="entry name" value="A86418"/>
</dbReference>
<dbReference type="RefSeq" id="NP_564332.1">
    <property type="nucleotide sequence ID" value="NM_102691.3"/>
</dbReference>
<dbReference type="FunCoup" id="F4I1I4">
    <property type="interactions" value="59"/>
</dbReference>
<dbReference type="STRING" id="3702.F4I1I4"/>
<dbReference type="PaxDb" id="3702-AT1G29510.1"/>
<dbReference type="EnsemblPlants" id="AT1G29510.1">
    <property type="protein sequence ID" value="AT1G29510.1"/>
    <property type="gene ID" value="AT1G29510"/>
</dbReference>
<dbReference type="GeneID" id="839828"/>
<dbReference type="Gramene" id="AT1G29510.1">
    <property type="protein sequence ID" value="AT1G29510.1"/>
    <property type="gene ID" value="AT1G29510"/>
</dbReference>
<dbReference type="KEGG" id="ath:AT1G29510"/>
<dbReference type="Araport" id="AT1G29510"/>
<dbReference type="TAIR" id="AT1G29510">
    <property type="gene designation" value="SAUR67"/>
</dbReference>
<dbReference type="eggNOG" id="ENOG502S4GQ">
    <property type="taxonomic scope" value="Eukaryota"/>
</dbReference>
<dbReference type="HOGENOM" id="CLU_090137_1_1_1"/>
<dbReference type="InParanoid" id="F4I1I4"/>
<dbReference type="OMA" id="PICSCER"/>
<dbReference type="PRO" id="PR:F4I1I4"/>
<dbReference type="Proteomes" id="UP000006548">
    <property type="component" value="Chromosome 1"/>
</dbReference>
<dbReference type="ExpressionAtlas" id="F4I1I4">
    <property type="expression patterns" value="baseline and differential"/>
</dbReference>
<dbReference type="GO" id="GO:0005886">
    <property type="term" value="C:plasma membrane"/>
    <property type="evidence" value="ECO:0007669"/>
    <property type="project" value="UniProtKB-SubCell"/>
</dbReference>
<dbReference type="GO" id="GO:0009734">
    <property type="term" value="P:auxin-activated signaling pathway"/>
    <property type="evidence" value="ECO:0007669"/>
    <property type="project" value="UniProtKB-KW"/>
</dbReference>
<dbReference type="InterPro" id="IPR003676">
    <property type="entry name" value="SAUR_fam"/>
</dbReference>
<dbReference type="PANTHER" id="PTHR31175">
    <property type="entry name" value="AUXIN-RESPONSIVE FAMILY PROTEIN"/>
    <property type="match status" value="1"/>
</dbReference>
<dbReference type="PANTHER" id="PTHR31175:SF99">
    <property type="entry name" value="AUXIN-RESPONSIVE PROTEIN SAUR61-RELATED"/>
    <property type="match status" value="1"/>
</dbReference>
<dbReference type="Pfam" id="PF02519">
    <property type="entry name" value="Auxin_inducible"/>
    <property type="match status" value="1"/>
</dbReference>
<keyword id="KW-0927">Auxin signaling pathway</keyword>
<keyword id="KW-1003">Cell membrane</keyword>
<keyword id="KW-0217">Developmental protein</keyword>
<keyword id="KW-0341">Growth regulation</keyword>
<keyword id="KW-0472">Membrane</keyword>
<keyword id="KW-1185">Reference proteome</keyword>
<sequence>MMINAKKLMKMAKKWQQRAALHRKRISFQRSNVFTSSSSTVEKGCFVVYTADKIRFAFPISYLSNSIVQELLKISEEEFGLPTEGPITLPFDSVFLEYLIKLIQRRMDGDTEKALLMSISSAKCSLQCSLLQQEQSTQQLLVL</sequence>
<gene>
    <name evidence="2" type="primary">SAUR67</name>
    <name evidence="4" type="ordered locus">At1g29510</name>
    <name evidence="5" type="ORF">F15D2.9</name>
</gene>
<name>SAU67_ARATH</name>
<comment type="function">
    <text evidence="1">May promote auxin-stimulated organ elongation, such as hypocotyls, stamen filaments and petals.</text>
</comment>
<comment type="subcellular location">
    <subcellularLocation>
        <location evidence="1">Cell membrane</location>
        <topology evidence="1">Peripheral membrane protein</topology>
    </subcellularLocation>
</comment>
<comment type="similarity">
    <text evidence="3">Belongs to the ARG7 family.</text>
</comment>
<comment type="sequence caution" evidence="3">
    <conflict type="erroneous initiation">
        <sequence resource="EMBL-CDS" id="AAG51725"/>
    </conflict>
    <text>Truncated N-terminus.</text>
</comment>
<comment type="sequence caution" evidence="3">
    <conflict type="erroneous initiation">
        <sequence resource="EMBL-CDS" id="AAM67039"/>
    </conflict>
    <text>Truncated N-terminus.</text>
</comment>
<proteinExistence type="evidence at transcript level"/>
<organism>
    <name type="scientific">Arabidopsis thaliana</name>
    <name type="common">Mouse-ear cress</name>
    <dbReference type="NCBI Taxonomy" id="3702"/>
    <lineage>
        <taxon>Eukaryota</taxon>
        <taxon>Viridiplantae</taxon>
        <taxon>Streptophyta</taxon>
        <taxon>Embryophyta</taxon>
        <taxon>Tracheophyta</taxon>
        <taxon>Spermatophyta</taxon>
        <taxon>Magnoliopsida</taxon>
        <taxon>eudicotyledons</taxon>
        <taxon>Gunneridae</taxon>
        <taxon>Pentapetalae</taxon>
        <taxon>rosids</taxon>
        <taxon>malvids</taxon>
        <taxon>Brassicales</taxon>
        <taxon>Brassicaceae</taxon>
        <taxon>Camelineae</taxon>
        <taxon>Arabidopsis</taxon>
    </lineage>
</organism>
<protein>
    <recommendedName>
        <fullName evidence="3">Auxin-responsive protein SAUR67</fullName>
    </recommendedName>
    <alternativeName>
        <fullName evidence="2">Protein SMALL AUXIN UP RNA 67</fullName>
    </alternativeName>
</protein>
<accession>F4I1I4</accession>
<accession>Q8GWX6</accession>
<accession>Q8L8Z5</accession>
<accession>Q9C7Q0</accession>
<feature type="chain" id="PRO_0000433079" description="Auxin-responsive protein SAUR67">
    <location>
        <begin position="1"/>
        <end position="143"/>
    </location>
</feature>
<feature type="sequence conflict" description="In Ref. 3; BAC43173 and 4; AAO39888." evidence="3" ref="3 4">
    <original>E</original>
    <variation>G</variation>
    <location>
        <position position="70"/>
    </location>
</feature>
<feature type="sequence conflict" description="In Ref. 5; AAM67039." evidence="3" ref="5">
    <original>G</original>
    <variation>C</variation>
    <location>
        <position position="80"/>
    </location>
</feature>
<feature type="sequence conflict" description="In Ref. 5; AAM67039." evidence="3" ref="5">
    <original>L</original>
    <variation>F</variation>
    <location>
        <position position="99"/>
    </location>
</feature>